<evidence type="ECO:0000255" key="1">
    <source>
        <dbReference type="HAMAP-Rule" id="MF_01007"/>
    </source>
</evidence>
<gene>
    <name evidence="1" type="primary">rsmH</name>
    <name type="synonym">mraW</name>
    <name type="ordered locus">Rpic12D_2732</name>
</gene>
<name>RSMH_RALP1</name>
<comment type="function">
    <text evidence="1">Specifically methylates the N4 position of cytidine in position 1402 (C1402) of 16S rRNA.</text>
</comment>
<comment type="catalytic activity">
    <reaction evidence="1">
        <text>cytidine(1402) in 16S rRNA + S-adenosyl-L-methionine = N(4)-methylcytidine(1402) in 16S rRNA + S-adenosyl-L-homocysteine + H(+)</text>
        <dbReference type="Rhea" id="RHEA:42928"/>
        <dbReference type="Rhea" id="RHEA-COMP:10286"/>
        <dbReference type="Rhea" id="RHEA-COMP:10287"/>
        <dbReference type="ChEBI" id="CHEBI:15378"/>
        <dbReference type="ChEBI" id="CHEBI:57856"/>
        <dbReference type="ChEBI" id="CHEBI:59789"/>
        <dbReference type="ChEBI" id="CHEBI:74506"/>
        <dbReference type="ChEBI" id="CHEBI:82748"/>
        <dbReference type="EC" id="2.1.1.199"/>
    </reaction>
</comment>
<comment type="subcellular location">
    <subcellularLocation>
        <location evidence="1">Cytoplasm</location>
    </subcellularLocation>
</comment>
<comment type="similarity">
    <text evidence="1">Belongs to the methyltransferase superfamily. RsmH family.</text>
</comment>
<feature type="chain" id="PRO_0000387064" description="Ribosomal RNA small subunit methyltransferase H">
    <location>
        <begin position="1"/>
        <end position="319"/>
    </location>
</feature>
<feature type="binding site" evidence="1">
    <location>
        <begin position="39"/>
        <end position="41"/>
    </location>
    <ligand>
        <name>S-adenosyl-L-methionine</name>
        <dbReference type="ChEBI" id="CHEBI:59789"/>
    </ligand>
</feature>
<feature type="binding site" evidence="1">
    <location>
        <position position="59"/>
    </location>
    <ligand>
        <name>S-adenosyl-L-methionine</name>
        <dbReference type="ChEBI" id="CHEBI:59789"/>
    </ligand>
</feature>
<feature type="binding site" evidence="1">
    <location>
        <position position="83"/>
    </location>
    <ligand>
        <name>S-adenosyl-L-methionine</name>
        <dbReference type="ChEBI" id="CHEBI:59789"/>
    </ligand>
</feature>
<feature type="binding site" evidence="1">
    <location>
        <position position="104"/>
    </location>
    <ligand>
        <name>S-adenosyl-L-methionine</name>
        <dbReference type="ChEBI" id="CHEBI:59789"/>
    </ligand>
</feature>
<feature type="binding site" evidence="1">
    <location>
        <position position="111"/>
    </location>
    <ligand>
        <name>S-adenosyl-L-methionine</name>
        <dbReference type="ChEBI" id="CHEBI:59789"/>
    </ligand>
</feature>
<reference key="1">
    <citation type="submission" date="2009-06" db="EMBL/GenBank/DDBJ databases">
        <title>Complete sequence chromosome 1 of Ralstonia pickettii 12D.</title>
        <authorList>
            <consortium name="US DOE Joint Genome Institute"/>
            <person name="Lucas S."/>
            <person name="Copeland A."/>
            <person name="Lapidus A."/>
            <person name="Glavina del Rio T."/>
            <person name="Dalin E."/>
            <person name="Tice H."/>
            <person name="Bruce D."/>
            <person name="Goodwin L."/>
            <person name="Pitluck S."/>
            <person name="Sims D."/>
            <person name="Meincke L."/>
            <person name="Brettin T."/>
            <person name="Detter J.C."/>
            <person name="Han C."/>
            <person name="Larimer F."/>
            <person name="Land M."/>
            <person name="Hauser L."/>
            <person name="Kyrpides N."/>
            <person name="Ovchinnikova G."/>
            <person name="Marsh T."/>
            <person name="Richardson P."/>
        </authorList>
    </citation>
    <scope>NUCLEOTIDE SEQUENCE [LARGE SCALE GENOMIC DNA]</scope>
    <source>
        <strain>12D</strain>
    </source>
</reference>
<organism>
    <name type="scientific">Ralstonia pickettii (strain 12D)</name>
    <dbReference type="NCBI Taxonomy" id="428406"/>
    <lineage>
        <taxon>Bacteria</taxon>
        <taxon>Pseudomonadati</taxon>
        <taxon>Pseudomonadota</taxon>
        <taxon>Betaproteobacteria</taxon>
        <taxon>Burkholderiales</taxon>
        <taxon>Burkholderiaceae</taxon>
        <taxon>Ralstonia</taxon>
    </lineage>
</organism>
<keyword id="KW-0963">Cytoplasm</keyword>
<keyword id="KW-0489">Methyltransferase</keyword>
<keyword id="KW-0698">rRNA processing</keyword>
<keyword id="KW-0949">S-adenosyl-L-methionine</keyword>
<keyword id="KW-0808">Transferase</keyword>
<protein>
    <recommendedName>
        <fullName evidence="1">Ribosomal RNA small subunit methyltransferase H</fullName>
        <ecNumber evidence="1">2.1.1.199</ecNumber>
    </recommendedName>
    <alternativeName>
        <fullName evidence="1">16S rRNA m(4)C1402 methyltransferase</fullName>
    </alternativeName>
    <alternativeName>
        <fullName evidence="1">rRNA (cytosine-N(4)-)-methyltransferase RsmH</fullName>
    </alternativeName>
</protein>
<sequence>MTTQTSTGLRHQTVLLDEAVDALIWRDDGIYIDGTFGRGGHSRRILERLGPGGRLVAFDKDPAAITEAGTVEDARFAIEHDSFAQMAQCLDARGIERVAGVLLDLGISSPQIDEGERGFSFRMDGPLDMRMDTTRGITAAQWLAEADERDIARVIRDYGEERFAVQIAKAIVARRGQSGDRGPLDRTSELAALVAQAVKTREKGQDPATRTFQALRIHVNQELADLETGLKAAFDRLEQGGRLVVISFHSLEDRIVKRFMQALARPEQSAAPELRRAPLRAHELPAPQLRLLGRVKPSEAEVSANPRARSAIMRVAERC</sequence>
<proteinExistence type="inferred from homology"/>
<accession>C6BEJ1</accession>
<dbReference type="EC" id="2.1.1.199" evidence="1"/>
<dbReference type="EMBL" id="CP001644">
    <property type="protein sequence ID" value="ACS64003.1"/>
    <property type="molecule type" value="Genomic_DNA"/>
</dbReference>
<dbReference type="SMR" id="C6BEJ1"/>
<dbReference type="STRING" id="428406.Rpic12D_2732"/>
<dbReference type="KEGG" id="rpf:Rpic12D_2732"/>
<dbReference type="HOGENOM" id="CLU_038422_2_0_4"/>
<dbReference type="GO" id="GO:0005737">
    <property type="term" value="C:cytoplasm"/>
    <property type="evidence" value="ECO:0007669"/>
    <property type="project" value="UniProtKB-SubCell"/>
</dbReference>
<dbReference type="GO" id="GO:0071424">
    <property type="term" value="F:rRNA (cytosine-N4-)-methyltransferase activity"/>
    <property type="evidence" value="ECO:0007669"/>
    <property type="project" value="UniProtKB-UniRule"/>
</dbReference>
<dbReference type="GO" id="GO:0070475">
    <property type="term" value="P:rRNA base methylation"/>
    <property type="evidence" value="ECO:0007669"/>
    <property type="project" value="UniProtKB-UniRule"/>
</dbReference>
<dbReference type="FunFam" id="1.10.150.170:FF:000001">
    <property type="entry name" value="Ribosomal RNA small subunit methyltransferase H"/>
    <property type="match status" value="1"/>
</dbReference>
<dbReference type="Gene3D" id="1.10.150.170">
    <property type="entry name" value="Putative methyltransferase TM0872, insert domain"/>
    <property type="match status" value="1"/>
</dbReference>
<dbReference type="Gene3D" id="3.40.50.150">
    <property type="entry name" value="Vaccinia Virus protein VP39"/>
    <property type="match status" value="1"/>
</dbReference>
<dbReference type="HAMAP" id="MF_01007">
    <property type="entry name" value="16SrRNA_methyltr_H"/>
    <property type="match status" value="1"/>
</dbReference>
<dbReference type="InterPro" id="IPR002903">
    <property type="entry name" value="RsmH"/>
</dbReference>
<dbReference type="InterPro" id="IPR023397">
    <property type="entry name" value="SAM-dep_MeTrfase_MraW_recog"/>
</dbReference>
<dbReference type="InterPro" id="IPR029063">
    <property type="entry name" value="SAM-dependent_MTases_sf"/>
</dbReference>
<dbReference type="NCBIfam" id="TIGR00006">
    <property type="entry name" value="16S rRNA (cytosine(1402)-N(4))-methyltransferase RsmH"/>
    <property type="match status" value="1"/>
</dbReference>
<dbReference type="PANTHER" id="PTHR11265:SF0">
    <property type="entry name" value="12S RRNA N4-METHYLCYTIDINE METHYLTRANSFERASE"/>
    <property type="match status" value="1"/>
</dbReference>
<dbReference type="PANTHER" id="PTHR11265">
    <property type="entry name" value="S-ADENOSYL-METHYLTRANSFERASE MRAW"/>
    <property type="match status" value="1"/>
</dbReference>
<dbReference type="Pfam" id="PF01795">
    <property type="entry name" value="Methyltransf_5"/>
    <property type="match status" value="1"/>
</dbReference>
<dbReference type="PIRSF" id="PIRSF004486">
    <property type="entry name" value="MraW"/>
    <property type="match status" value="1"/>
</dbReference>
<dbReference type="SUPFAM" id="SSF81799">
    <property type="entry name" value="Putative methyltransferase TM0872, insert domain"/>
    <property type="match status" value="1"/>
</dbReference>
<dbReference type="SUPFAM" id="SSF53335">
    <property type="entry name" value="S-adenosyl-L-methionine-dependent methyltransferases"/>
    <property type="match status" value="1"/>
</dbReference>